<protein>
    <recommendedName>
        <fullName evidence="1">Non-homologous end joining protein Ku</fullName>
    </recommendedName>
</protein>
<keyword id="KW-0227">DNA damage</keyword>
<keyword id="KW-0233">DNA recombination</keyword>
<keyword id="KW-0234">DNA repair</keyword>
<keyword id="KW-0238">DNA-binding</keyword>
<keyword id="KW-1185">Reference proteome</keyword>
<dbReference type="EMBL" id="CU234118">
    <property type="protein sequence ID" value="CAL79488.1"/>
    <property type="molecule type" value="Genomic_DNA"/>
</dbReference>
<dbReference type="RefSeq" id="WP_012029391.1">
    <property type="nucleotide sequence ID" value="NC_009445.1"/>
</dbReference>
<dbReference type="SMR" id="A4Z012"/>
<dbReference type="STRING" id="114615.BRADO5824"/>
<dbReference type="KEGG" id="bra:BRADO5824"/>
<dbReference type="eggNOG" id="COG1273">
    <property type="taxonomic scope" value="Bacteria"/>
</dbReference>
<dbReference type="HOGENOM" id="CLU_048975_0_0_5"/>
<dbReference type="OrthoDB" id="9780854at2"/>
<dbReference type="Proteomes" id="UP000001994">
    <property type="component" value="Chromosome"/>
</dbReference>
<dbReference type="GO" id="GO:0003690">
    <property type="term" value="F:double-stranded DNA binding"/>
    <property type="evidence" value="ECO:0007669"/>
    <property type="project" value="UniProtKB-UniRule"/>
</dbReference>
<dbReference type="GO" id="GO:0006310">
    <property type="term" value="P:DNA recombination"/>
    <property type="evidence" value="ECO:0007669"/>
    <property type="project" value="UniProtKB-KW"/>
</dbReference>
<dbReference type="GO" id="GO:0006303">
    <property type="term" value="P:double-strand break repair via nonhomologous end joining"/>
    <property type="evidence" value="ECO:0007669"/>
    <property type="project" value="UniProtKB-UniRule"/>
</dbReference>
<dbReference type="CDD" id="cd00789">
    <property type="entry name" value="KU_like"/>
    <property type="match status" value="1"/>
</dbReference>
<dbReference type="FunFam" id="2.40.290.10:FF:000004">
    <property type="entry name" value="Non-homologous end joining protein Ku"/>
    <property type="match status" value="1"/>
</dbReference>
<dbReference type="Gene3D" id="2.40.290.10">
    <property type="match status" value="1"/>
</dbReference>
<dbReference type="HAMAP" id="MF_01875">
    <property type="entry name" value="Prokaryotic_Ku"/>
    <property type="match status" value="1"/>
</dbReference>
<dbReference type="InterPro" id="IPR006164">
    <property type="entry name" value="Ku70/Ku80_beta-barrel_dom"/>
</dbReference>
<dbReference type="InterPro" id="IPR009187">
    <property type="entry name" value="Prok_Ku"/>
</dbReference>
<dbReference type="InterPro" id="IPR016194">
    <property type="entry name" value="SPOC-like_C_dom_sf"/>
</dbReference>
<dbReference type="NCBIfam" id="TIGR02772">
    <property type="entry name" value="Ku_bact"/>
    <property type="match status" value="1"/>
</dbReference>
<dbReference type="PANTHER" id="PTHR41251">
    <property type="entry name" value="NON-HOMOLOGOUS END JOINING PROTEIN KU"/>
    <property type="match status" value="1"/>
</dbReference>
<dbReference type="PANTHER" id="PTHR41251:SF1">
    <property type="entry name" value="NON-HOMOLOGOUS END JOINING PROTEIN KU"/>
    <property type="match status" value="1"/>
</dbReference>
<dbReference type="Pfam" id="PF02735">
    <property type="entry name" value="Ku"/>
    <property type="match status" value="1"/>
</dbReference>
<dbReference type="PIRSF" id="PIRSF006493">
    <property type="entry name" value="Prok_Ku"/>
    <property type="match status" value="1"/>
</dbReference>
<dbReference type="SMART" id="SM00559">
    <property type="entry name" value="Ku78"/>
    <property type="match status" value="1"/>
</dbReference>
<dbReference type="SUPFAM" id="SSF100939">
    <property type="entry name" value="SPOC domain-like"/>
    <property type="match status" value="1"/>
</dbReference>
<sequence>MAPRAYWKGSLKLSLVTCPVVLYPASTSVEKTRFHLINRETGNRLKQQMIDAETGDLVEGDQKGRGYELSKGQYVEIEPEELEAVQIESNHTIDIDSFVPREEIDQRYLNHPYYIAPDGKAAVDAFAVIRDAMKDQDRVALARIVLTHREHVIAIEPMGKGMLGTTLRFPYELRDEAEFFDDIKAPKITKDMVELAGHILQTKAAHFKPSEFKDQYETALKALVKRKASGKPIKLPEPEERSGNVVSLMDALKQSLGKGDKKAAPAPSRRAPAHRRPAKKAHRSAARQRKAG</sequence>
<comment type="function">
    <text evidence="1">With LigD forms a non-homologous end joining (NHEJ) DNA repair enzyme, which repairs dsDNA breaks with reduced fidelity. Binds linear dsDNA with 5'- and 3'- overhangs but not closed circular dsDNA nor ssDNA. Recruits and stimulates the ligase activity of LigD.</text>
</comment>
<comment type="subunit">
    <text evidence="1">Homodimer. Interacts with LigD.</text>
</comment>
<comment type="similarity">
    <text evidence="1">Belongs to the prokaryotic Ku family.</text>
</comment>
<proteinExistence type="inferred from homology"/>
<feature type="chain" id="PRO_0000389178" description="Non-homologous end joining protein Ku">
    <location>
        <begin position="1"/>
        <end position="292"/>
    </location>
</feature>
<feature type="domain" description="Ku" evidence="1">
    <location>
        <begin position="12"/>
        <end position="196"/>
    </location>
</feature>
<feature type="region of interest" description="Disordered" evidence="2">
    <location>
        <begin position="231"/>
        <end position="292"/>
    </location>
</feature>
<feature type="compositionally biased region" description="Basic residues" evidence="2">
    <location>
        <begin position="271"/>
        <end position="292"/>
    </location>
</feature>
<name>KU_BRASO</name>
<evidence type="ECO:0000255" key="1">
    <source>
        <dbReference type="HAMAP-Rule" id="MF_01875"/>
    </source>
</evidence>
<evidence type="ECO:0000256" key="2">
    <source>
        <dbReference type="SAM" id="MobiDB-lite"/>
    </source>
</evidence>
<organism>
    <name type="scientific">Bradyrhizobium sp. (strain ORS 278)</name>
    <dbReference type="NCBI Taxonomy" id="114615"/>
    <lineage>
        <taxon>Bacteria</taxon>
        <taxon>Pseudomonadati</taxon>
        <taxon>Pseudomonadota</taxon>
        <taxon>Alphaproteobacteria</taxon>
        <taxon>Hyphomicrobiales</taxon>
        <taxon>Nitrobacteraceae</taxon>
        <taxon>Bradyrhizobium</taxon>
    </lineage>
</organism>
<reference key="1">
    <citation type="journal article" date="2007" name="Science">
        <title>Legumes symbioses: absence of nod genes in photosynthetic bradyrhizobia.</title>
        <authorList>
            <person name="Giraud E."/>
            <person name="Moulin L."/>
            <person name="Vallenet D."/>
            <person name="Barbe V."/>
            <person name="Cytryn E."/>
            <person name="Avarre J.-C."/>
            <person name="Jaubert M."/>
            <person name="Simon D."/>
            <person name="Cartieaux F."/>
            <person name="Prin Y."/>
            <person name="Bena G."/>
            <person name="Hannibal L."/>
            <person name="Fardoux J."/>
            <person name="Kojadinovic M."/>
            <person name="Vuillet L."/>
            <person name="Lajus A."/>
            <person name="Cruveiller S."/>
            <person name="Rouy Z."/>
            <person name="Mangenot S."/>
            <person name="Segurens B."/>
            <person name="Dossat C."/>
            <person name="Franck W.L."/>
            <person name="Chang W.-S."/>
            <person name="Saunders E."/>
            <person name="Bruce D."/>
            <person name="Richardson P."/>
            <person name="Normand P."/>
            <person name="Dreyfus B."/>
            <person name="Pignol D."/>
            <person name="Stacey G."/>
            <person name="Emerich D."/>
            <person name="Vermeglio A."/>
            <person name="Medigue C."/>
            <person name="Sadowsky M."/>
        </authorList>
    </citation>
    <scope>NUCLEOTIDE SEQUENCE [LARGE SCALE GENOMIC DNA]</scope>
    <source>
        <strain>ORS 278</strain>
    </source>
</reference>
<gene>
    <name evidence="1" type="primary">ku</name>
    <name type="ordered locus">BRADO5824</name>
</gene>
<accession>A4Z012</accession>